<accession>A9KX17</accession>
<evidence type="ECO:0000255" key="1">
    <source>
        <dbReference type="HAMAP-Rule" id="MF_00129"/>
    </source>
</evidence>
<reference key="1">
    <citation type="submission" date="2007-11" db="EMBL/GenBank/DDBJ databases">
        <title>Complete sequence of chromosome of Shewanella baltica OS195.</title>
        <authorList>
            <consortium name="US DOE Joint Genome Institute"/>
            <person name="Copeland A."/>
            <person name="Lucas S."/>
            <person name="Lapidus A."/>
            <person name="Barry K."/>
            <person name="Glavina del Rio T."/>
            <person name="Dalin E."/>
            <person name="Tice H."/>
            <person name="Pitluck S."/>
            <person name="Chain P."/>
            <person name="Malfatti S."/>
            <person name="Shin M."/>
            <person name="Vergez L."/>
            <person name="Schmutz J."/>
            <person name="Larimer F."/>
            <person name="Land M."/>
            <person name="Hauser L."/>
            <person name="Kyrpides N."/>
            <person name="Kim E."/>
            <person name="Brettar I."/>
            <person name="Rodrigues J."/>
            <person name="Konstantinidis K."/>
            <person name="Klappenbach J."/>
            <person name="Hofle M."/>
            <person name="Tiedje J."/>
            <person name="Richardson P."/>
        </authorList>
    </citation>
    <scope>NUCLEOTIDE SEQUENCE [LARGE SCALE GENOMIC DNA]</scope>
    <source>
        <strain>OS195</strain>
    </source>
</reference>
<comment type="function">
    <text evidence="1">NAD-binding protein involved in the addition of a carboxymethylaminomethyl (cmnm) group at the wobble position (U34) of certain tRNAs, forming tRNA-cmnm(5)s(2)U34.</text>
</comment>
<comment type="cofactor">
    <cofactor evidence="1">
        <name>FAD</name>
        <dbReference type="ChEBI" id="CHEBI:57692"/>
    </cofactor>
</comment>
<comment type="subunit">
    <text evidence="1">Homodimer. Heterotetramer of two MnmE and two MnmG subunits.</text>
</comment>
<comment type="subcellular location">
    <subcellularLocation>
        <location evidence="1">Cytoplasm</location>
    </subcellularLocation>
</comment>
<comment type="similarity">
    <text evidence="1">Belongs to the MnmG family.</text>
</comment>
<dbReference type="EMBL" id="CP000891">
    <property type="protein sequence ID" value="ABX51675.1"/>
    <property type="molecule type" value="Genomic_DNA"/>
</dbReference>
<dbReference type="RefSeq" id="WP_006084766.1">
    <property type="nucleotide sequence ID" value="NC_009997.1"/>
</dbReference>
<dbReference type="SMR" id="A9KX17"/>
<dbReference type="GeneID" id="11774471"/>
<dbReference type="KEGG" id="sbn:Sbal195_4518"/>
<dbReference type="HOGENOM" id="CLU_007831_2_2_6"/>
<dbReference type="Proteomes" id="UP000000770">
    <property type="component" value="Chromosome"/>
</dbReference>
<dbReference type="GO" id="GO:0005829">
    <property type="term" value="C:cytosol"/>
    <property type="evidence" value="ECO:0007669"/>
    <property type="project" value="TreeGrafter"/>
</dbReference>
<dbReference type="GO" id="GO:0050660">
    <property type="term" value="F:flavin adenine dinucleotide binding"/>
    <property type="evidence" value="ECO:0007669"/>
    <property type="project" value="UniProtKB-UniRule"/>
</dbReference>
<dbReference type="GO" id="GO:0030488">
    <property type="term" value="P:tRNA methylation"/>
    <property type="evidence" value="ECO:0007669"/>
    <property type="project" value="TreeGrafter"/>
</dbReference>
<dbReference type="GO" id="GO:0002098">
    <property type="term" value="P:tRNA wobble uridine modification"/>
    <property type="evidence" value="ECO:0007669"/>
    <property type="project" value="InterPro"/>
</dbReference>
<dbReference type="FunFam" id="1.10.10.1800:FF:000001">
    <property type="entry name" value="tRNA uridine 5-carboxymethylaminomethyl modification enzyme MnmG"/>
    <property type="match status" value="1"/>
</dbReference>
<dbReference type="FunFam" id="1.10.150.570:FF:000001">
    <property type="entry name" value="tRNA uridine 5-carboxymethylaminomethyl modification enzyme MnmG"/>
    <property type="match status" value="1"/>
</dbReference>
<dbReference type="FunFam" id="3.50.50.60:FF:000002">
    <property type="entry name" value="tRNA uridine 5-carboxymethylaminomethyl modification enzyme MnmG"/>
    <property type="match status" value="1"/>
</dbReference>
<dbReference type="FunFam" id="3.50.50.60:FF:000010">
    <property type="entry name" value="tRNA uridine 5-carboxymethylaminomethyl modification enzyme MnmG"/>
    <property type="match status" value="1"/>
</dbReference>
<dbReference type="Gene3D" id="3.50.50.60">
    <property type="entry name" value="FAD/NAD(P)-binding domain"/>
    <property type="match status" value="2"/>
</dbReference>
<dbReference type="Gene3D" id="1.10.150.570">
    <property type="entry name" value="GidA associated domain, C-terminal subdomain"/>
    <property type="match status" value="1"/>
</dbReference>
<dbReference type="Gene3D" id="1.10.10.1800">
    <property type="entry name" value="tRNA uridine 5-carboxymethylaminomethyl modification enzyme MnmG/GidA"/>
    <property type="match status" value="1"/>
</dbReference>
<dbReference type="HAMAP" id="MF_00129">
    <property type="entry name" value="MnmG_GidA"/>
    <property type="match status" value="1"/>
</dbReference>
<dbReference type="InterPro" id="IPR036188">
    <property type="entry name" value="FAD/NAD-bd_sf"/>
</dbReference>
<dbReference type="InterPro" id="IPR049312">
    <property type="entry name" value="GIDA_C_N"/>
</dbReference>
<dbReference type="InterPro" id="IPR004416">
    <property type="entry name" value="MnmG"/>
</dbReference>
<dbReference type="InterPro" id="IPR002218">
    <property type="entry name" value="MnmG-rel"/>
</dbReference>
<dbReference type="InterPro" id="IPR020595">
    <property type="entry name" value="MnmG-rel_CS"/>
</dbReference>
<dbReference type="InterPro" id="IPR026904">
    <property type="entry name" value="MnmG_C"/>
</dbReference>
<dbReference type="InterPro" id="IPR047001">
    <property type="entry name" value="MnmG_C_subdom"/>
</dbReference>
<dbReference type="InterPro" id="IPR044920">
    <property type="entry name" value="MnmG_C_subdom_sf"/>
</dbReference>
<dbReference type="InterPro" id="IPR040131">
    <property type="entry name" value="MnmG_N"/>
</dbReference>
<dbReference type="NCBIfam" id="TIGR00136">
    <property type="entry name" value="mnmG_gidA"/>
    <property type="match status" value="1"/>
</dbReference>
<dbReference type="PANTHER" id="PTHR11806">
    <property type="entry name" value="GLUCOSE INHIBITED DIVISION PROTEIN A"/>
    <property type="match status" value="1"/>
</dbReference>
<dbReference type="PANTHER" id="PTHR11806:SF0">
    <property type="entry name" value="PROTEIN MTO1 HOMOLOG, MITOCHONDRIAL"/>
    <property type="match status" value="1"/>
</dbReference>
<dbReference type="Pfam" id="PF01134">
    <property type="entry name" value="GIDA"/>
    <property type="match status" value="1"/>
</dbReference>
<dbReference type="Pfam" id="PF21680">
    <property type="entry name" value="GIDA_C_1st"/>
    <property type="match status" value="1"/>
</dbReference>
<dbReference type="Pfam" id="PF13932">
    <property type="entry name" value="SAM_GIDA_C"/>
    <property type="match status" value="1"/>
</dbReference>
<dbReference type="SMART" id="SM01228">
    <property type="entry name" value="GIDA_assoc_3"/>
    <property type="match status" value="1"/>
</dbReference>
<dbReference type="SUPFAM" id="SSF51905">
    <property type="entry name" value="FAD/NAD(P)-binding domain"/>
    <property type="match status" value="1"/>
</dbReference>
<dbReference type="PROSITE" id="PS01280">
    <property type="entry name" value="GIDA_1"/>
    <property type="match status" value="1"/>
</dbReference>
<dbReference type="PROSITE" id="PS01281">
    <property type="entry name" value="GIDA_2"/>
    <property type="match status" value="1"/>
</dbReference>
<organism>
    <name type="scientific">Shewanella baltica (strain OS195)</name>
    <dbReference type="NCBI Taxonomy" id="399599"/>
    <lineage>
        <taxon>Bacteria</taxon>
        <taxon>Pseudomonadati</taxon>
        <taxon>Pseudomonadota</taxon>
        <taxon>Gammaproteobacteria</taxon>
        <taxon>Alteromonadales</taxon>
        <taxon>Shewanellaceae</taxon>
        <taxon>Shewanella</taxon>
    </lineage>
</organism>
<protein>
    <recommendedName>
        <fullName evidence="1">tRNA uridine 5-carboxymethylaminomethyl modification enzyme MnmG</fullName>
    </recommendedName>
    <alternativeName>
        <fullName evidence="1">Glucose-inhibited division protein A</fullName>
    </alternativeName>
</protein>
<sequence length="629" mass="69286">MHFHERFDVIVVGGGHAGTEAALAAARMGSKTLLLTHNIDTLGQMSCNPAIGGIGKGHLVKEIDALGGAMAIATDYAGIQFRTLNSSKGPAVRATRAQADRALYRQKIQNILQNQPNLRIFQQAVDDLIVENHQVVGVVTQMGLAFESPAVVLTTGTFLSGKIHIGLENYSGGRAGDPPAIALANRLRELPIRVGRLKTGTPPRIDANTIDFSQMAEQKGDSPLPVMSFMGDVSHHPKQISCWITHTNEKTHEIIRGGLDRSPMYSGVIEGIGPRYCPSIEDKIHRFADKSSHQIFIEPEGLNTSEIYPNGISTSLPFDVQLNLVRSIKGMENAEIMRPGYAIEYDYFDPRDLKNSLETKAINGLFFAGQINGTTGYEEAGAQGLLAGMNASLQVQGKEAWCPRRDEAYLGVLVDDLSTLGTKEPYRMFTSRAEYRLLLREDNADIRLTAKGRELGLVDDARWAAFSEKLESIELELQRLRGQWVHPNSPLIHALNPHLNTPISREASFEELLRRPEMDYSKLMQIEGFGPGLEDPQAAEQVQIQVKYSGYIQRQQEEINKAVRNENTGLPLTLDYKEVPGLSNEVIAKLNNHKPETIGQASRISGITPAAISILLVHLKKRGLLRKSA</sequence>
<name>MNMG_SHEB9</name>
<keyword id="KW-0963">Cytoplasm</keyword>
<keyword id="KW-0274">FAD</keyword>
<keyword id="KW-0285">Flavoprotein</keyword>
<keyword id="KW-0520">NAD</keyword>
<keyword id="KW-0819">tRNA processing</keyword>
<feature type="chain" id="PRO_1000076330" description="tRNA uridine 5-carboxymethylaminomethyl modification enzyme MnmG">
    <location>
        <begin position="1"/>
        <end position="629"/>
    </location>
</feature>
<feature type="binding site" evidence="1">
    <location>
        <begin position="13"/>
        <end position="18"/>
    </location>
    <ligand>
        <name>FAD</name>
        <dbReference type="ChEBI" id="CHEBI:57692"/>
    </ligand>
</feature>
<feature type="binding site" evidence="1">
    <location>
        <begin position="273"/>
        <end position="287"/>
    </location>
    <ligand>
        <name>NAD(+)</name>
        <dbReference type="ChEBI" id="CHEBI:57540"/>
    </ligand>
</feature>
<gene>
    <name evidence="1" type="primary">mnmG</name>
    <name evidence="1" type="synonym">gidA</name>
    <name type="ordered locus">Sbal195_4518</name>
</gene>
<proteinExistence type="inferred from homology"/>